<gene>
    <name type="primary">rpmC</name>
</gene>
<organism>
    <name type="scientific">Geobacillus stearothermophilus</name>
    <name type="common">Bacillus stearothermophilus</name>
    <dbReference type="NCBI Taxonomy" id="1422"/>
    <lineage>
        <taxon>Bacteria</taxon>
        <taxon>Bacillati</taxon>
        <taxon>Bacillota</taxon>
        <taxon>Bacilli</taxon>
        <taxon>Bacillales</taxon>
        <taxon>Anoxybacillaceae</taxon>
        <taxon>Geobacillus</taxon>
    </lineage>
</organism>
<keyword id="KW-0903">Direct protein sequencing</keyword>
<keyword id="KW-0687">Ribonucleoprotein</keyword>
<keyword id="KW-0689">Ribosomal protein</keyword>
<proteinExistence type="evidence at protein level"/>
<dbReference type="PIR" id="A02825">
    <property type="entry name" value="R5BS29"/>
</dbReference>
<dbReference type="RefSeq" id="WP_011229628.1">
    <property type="nucleotide sequence ID" value="NZ_RCTK01000011.1"/>
</dbReference>
<dbReference type="SMR" id="P04457"/>
<dbReference type="GeneID" id="89612892"/>
<dbReference type="OrthoDB" id="9815192at2"/>
<dbReference type="GO" id="GO:0022625">
    <property type="term" value="C:cytosolic large ribosomal subunit"/>
    <property type="evidence" value="ECO:0007669"/>
    <property type="project" value="TreeGrafter"/>
</dbReference>
<dbReference type="GO" id="GO:0003735">
    <property type="term" value="F:structural constituent of ribosome"/>
    <property type="evidence" value="ECO:0007669"/>
    <property type="project" value="InterPro"/>
</dbReference>
<dbReference type="GO" id="GO:0006412">
    <property type="term" value="P:translation"/>
    <property type="evidence" value="ECO:0007669"/>
    <property type="project" value="UniProtKB-UniRule"/>
</dbReference>
<dbReference type="CDD" id="cd00427">
    <property type="entry name" value="Ribosomal_L29_HIP"/>
    <property type="match status" value="1"/>
</dbReference>
<dbReference type="FunFam" id="1.10.287.310:FF:000001">
    <property type="entry name" value="50S ribosomal protein L29"/>
    <property type="match status" value="1"/>
</dbReference>
<dbReference type="Gene3D" id="1.10.287.310">
    <property type="match status" value="1"/>
</dbReference>
<dbReference type="HAMAP" id="MF_00374">
    <property type="entry name" value="Ribosomal_uL29"/>
    <property type="match status" value="1"/>
</dbReference>
<dbReference type="InterPro" id="IPR050063">
    <property type="entry name" value="Ribosomal_protein_uL29"/>
</dbReference>
<dbReference type="InterPro" id="IPR001854">
    <property type="entry name" value="Ribosomal_uL29"/>
</dbReference>
<dbReference type="InterPro" id="IPR018254">
    <property type="entry name" value="Ribosomal_uL29_CS"/>
</dbReference>
<dbReference type="InterPro" id="IPR036049">
    <property type="entry name" value="Ribosomal_uL29_sf"/>
</dbReference>
<dbReference type="NCBIfam" id="TIGR00012">
    <property type="entry name" value="L29"/>
    <property type="match status" value="1"/>
</dbReference>
<dbReference type="PANTHER" id="PTHR10916">
    <property type="entry name" value="60S RIBOSOMAL PROTEIN L35/50S RIBOSOMAL PROTEIN L29"/>
    <property type="match status" value="1"/>
</dbReference>
<dbReference type="PANTHER" id="PTHR10916:SF0">
    <property type="entry name" value="LARGE RIBOSOMAL SUBUNIT PROTEIN UL29C"/>
    <property type="match status" value="1"/>
</dbReference>
<dbReference type="Pfam" id="PF00831">
    <property type="entry name" value="Ribosomal_L29"/>
    <property type="match status" value="1"/>
</dbReference>
<dbReference type="SUPFAM" id="SSF46561">
    <property type="entry name" value="Ribosomal protein L29 (L29p)"/>
    <property type="match status" value="1"/>
</dbReference>
<dbReference type="PROSITE" id="PS00579">
    <property type="entry name" value="RIBOSOMAL_L29"/>
    <property type="match status" value="1"/>
</dbReference>
<feature type="chain" id="PRO_0000130354" description="Large ribosomal subunit protein uL29">
    <location>
        <begin position="1"/>
        <end position="66"/>
    </location>
</feature>
<comment type="similarity">
    <text evidence="1">Belongs to the universal ribosomal protein uL29 family.</text>
</comment>
<reference key="1">
    <citation type="journal article" date="1985" name="Eur. J. Biochem.">
        <title>The complete primary structure of ribosomal proteins L1, L14, L15, L23, L24 and L29 from Bacillus stearothermophilus.</title>
        <authorList>
            <person name="Kimura M."/>
            <person name="Kimura J."/>
            <person name="Ashman K."/>
        </authorList>
    </citation>
    <scope>PROTEIN SEQUENCE</scope>
</reference>
<reference key="2">
    <citation type="journal article" date="1995" name="EMBO J.">
        <title>Protein-rRNA binding features and their structural and functional implications in ribosomes as determined by cross-linking studies.</title>
        <authorList>
            <person name="Urlaub H."/>
            <person name="Kruft V."/>
            <person name="Bischof O."/>
            <person name="Mueller E.-C."/>
            <person name="Wittmann-Liebold B."/>
        </authorList>
    </citation>
    <scope>PROTEIN SEQUENCE OF 3-17 AND 55-66</scope>
    <scope>CROSS-LINKING TO RRNA</scope>
    <source>
        <strain>799</strain>
    </source>
</reference>
<protein>
    <recommendedName>
        <fullName evidence="1">Large ribosomal subunit protein uL29</fullName>
    </recommendedName>
    <alternativeName>
        <fullName>50S ribosomal protein L29</fullName>
    </alternativeName>
</protein>
<sequence length="66" mass="7796">MKAKEIRELTTAEIEQKIKALKEELFNLRFQLATGQLENTARIRQVRKDIARMKTIIRERELAANK</sequence>
<name>RL29_GEOSE</name>
<evidence type="ECO:0000305" key="1"/>
<accession>P04457</accession>